<dbReference type="EMBL" id="L19201">
    <property type="protein sequence ID" value="AAB03028.1"/>
    <property type="molecule type" value="Genomic_DNA"/>
</dbReference>
<dbReference type="EMBL" id="U00096">
    <property type="protein sequence ID" value="AAC76877.1"/>
    <property type="molecule type" value="Genomic_DNA"/>
</dbReference>
<dbReference type="EMBL" id="AP009048">
    <property type="protein sequence ID" value="BAE77414.1"/>
    <property type="molecule type" value="Genomic_DNA"/>
</dbReference>
<dbReference type="PIR" id="S40839">
    <property type="entry name" value="S40839"/>
</dbReference>
<dbReference type="RefSeq" id="NP_418331.1">
    <property type="nucleotide sequence ID" value="NC_000913.3"/>
</dbReference>
<dbReference type="RefSeq" id="WP_000753617.1">
    <property type="nucleotide sequence ID" value="NZ_STEB01000017.1"/>
</dbReference>
<dbReference type="PDB" id="4PDE">
    <property type="method" value="X-ray"/>
    <property type="resolution" value="2.80 A"/>
    <property type="chains" value="A=1-277"/>
</dbReference>
<dbReference type="PDBsum" id="4PDE"/>
<dbReference type="SMR" id="P32177"/>
<dbReference type="BioGRID" id="4263324">
    <property type="interactions" value="28"/>
</dbReference>
<dbReference type="BioGRID" id="852690">
    <property type="interactions" value="1"/>
</dbReference>
<dbReference type="DIP" id="DIP-9570N"/>
<dbReference type="FunCoup" id="P32177">
    <property type="interactions" value="357"/>
</dbReference>
<dbReference type="IntAct" id="P32177">
    <property type="interactions" value="20"/>
</dbReference>
<dbReference type="STRING" id="511145.b3895"/>
<dbReference type="jPOST" id="P32177"/>
<dbReference type="PaxDb" id="511145-b3895"/>
<dbReference type="EnsemblBacteria" id="AAC76877">
    <property type="protein sequence ID" value="AAC76877"/>
    <property type="gene ID" value="b3895"/>
</dbReference>
<dbReference type="GeneID" id="93778043"/>
<dbReference type="GeneID" id="948393"/>
<dbReference type="KEGG" id="ecj:JW3866"/>
<dbReference type="KEGG" id="eco:b3895"/>
<dbReference type="KEGG" id="ecoc:C3026_21060"/>
<dbReference type="PATRIC" id="fig|1411691.4.peg.2812"/>
<dbReference type="EchoBASE" id="EB1805"/>
<dbReference type="eggNOG" id="COG1526">
    <property type="taxonomic scope" value="Bacteria"/>
</dbReference>
<dbReference type="HOGENOM" id="CLU_056887_2_0_6"/>
<dbReference type="InParanoid" id="P32177"/>
<dbReference type="OMA" id="RYCAGAT"/>
<dbReference type="OrthoDB" id="3197277at2"/>
<dbReference type="PhylomeDB" id="P32177"/>
<dbReference type="BioCyc" id="EcoCyc:EG11859-MONOMER"/>
<dbReference type="EvolutionaryTrace" id="P32177"/>
<dbReference type="PRO" id="PR:P32177"/>
<dbReference type="Proteomes" id="UP000000625">
    <property type="component" value="Chromosome"/>
</dbReference>
<dbReference type="GO" id="GO:0005829">
    <property type="term" value="C:cytosol"/>
    <property type="evidence" value="ECO:0000314"/>
    <property type="project" value="EcoCyc"/>
</dbReference>
<dbReference type="GO" id="GO:0043546">
    <property type="term" value="F:molybdopterin cofactor binding"/>
    <property type="evidence" value="ECO:0000314"/>
    <property type="project" value="EcoCyc"/>
</dbReference>
<dbReference type="GO" id="GO:0042803">
    <property type="term" value="F:protein homodimerization activity"/>
    <property type="evidence" value="ECO:0000314"/>
    <property type="project" value="EcoCyc"/>
</dbReference>
<dbReference type="GO" id="GO:0097163">
    <property type="term" value="F:sulfur carrier activity"/>
    <property type="evidence" value="ECO:0000315"/>
    <property type="project" value="EcoCyc"/>
</dbReference>
<dbReference type="GO" id="GO:0016783">
    <property type="term" value="F:sulfurtransferase activity"/>
    <property type="evidence" value="ECO:0007669"/>
    <property type="project" value="InterPro"/>
</dbReference>
<dbReference type="GO" id="GO:0006777">
    <property type="term" value="P:Mo-molybdopterin cofactor biosynthetic process"/>
    <property type="evidence" value="ECO:0007669"/>
    <property type="project" value="UniProtKB-UniRule"/>
</dbReference>
<dbReference type="FunFam" id="3.10.20.10:FF:000003">
    <property type="entry name" value="Sulfur carrier protein FdhD"/>
    <property type="match status" value="1"/>
</dbReference>
<dbReference type="FunFam" id="3.40.140.10:FF:000027">
    <property type="entry name" value="Sulfur carrier protein FdhD"/>
    <property type="match status" value="1"/>
</dbReference>
<dbReference type="Gene3D" id="3.10.20.10">
    <property type="match status" value="1"/>
</dbReference>
<dbReference type="Gene3D" id="3.40.140.10">
    <property type="entry name" value="Cytidine Deaminase, domain 2"/>
    <property type="match status" value="1"/>
</dbReference>
<dbReference type="HAMAP" id="MF_00187">
    <property type="entry name" value="FdhD"/>
    <property type="match status" value="1"/>
</dbReference>
<dbReference type="InterPro" id="IPR016193">
    <property type="entry name" value="Cytidine_deaminase-like"/>
</dbReference>
<dbReference type="InterPro" id="IPR003786">
    <property type="entry name" value="FdhD"/>
</dbReference>
<dbReference type="NCBIfam" id="TIGR00129">
    <property type="entry name" value="fdhD_narQ"/>
    <property type="match status" value="1"/>
</dbReference>
<dbReference type="PANTHER" id="PTHR30592">
    <property type="entry name" value="FORMATE DEHYDROGENASE"/>
    <property type="match status" value="1"/>
</dbReference>
<dbReference type="PANTHER" id="PTHR30592:SF1">
    <property type="entry name" value="SULFUR CARRIER PROTEIN FDHD"/>
    <property type="match status" value="1"/>
</dbReference>
<dbReference type="Pfam" id="PF02634">
    <property type="entry name" value="FdhD-NarQ"/>
    <property type="match status" value="1"/>
</dbReference>
<dbReference type="PIRSF" id="PIRSF015626">
    <property type="entry name" value="FdhD"/>
    <property type="match status" value="1"/>
</dbReference>
<dbReference type="SUPFAM" id="SSF53927">
    <property type="entry name" value="Cytidine deaminase-like"/>
    <property type="match status" value="1"/>
</dbReference>
<name>FDHD_ECOLI</name>
<feature type="chain" id="PRO_0000152899" description="Sulfur carrier protein FdhD">
    <location>
        <begin position="1"/>
        <end position="277"/>
    </location>
</feature>
<feature type="active site" description="Cysteine persulfide intermediate" evidence="1 3">
    <location>
        <position position="121"/>
    </location>
</feature>
<feature type="binding site" evidence="1 10">
    <location>
        <begin position="260"/>
        <end position="265"/>
    </location>
    <ligand>
        <name>Mo-bis(molybdopterin guanine dinucleotide)</name>
        <dbReference type="ChEBI" id="CHEBI:60539"/>
    </ligand>
</feature>
<feature type="mutagenesis site" description="Prevents sulfur transfer from IscS and impairs FDH-H activity." evidence="3">
    <original>C</original>
    <variation>A</variation>
    <location>
        <position position="121"/>
    </location>
</feature>
<feature type="mutagenesis site" description="Does not affect sulfur transfer from IscS, but abolishes FDH-H activity." evidence="3">
    <original>C</original>
    <variation>A</variation>
    <location>
        <position position="124"/>
    </location>
</feature>
<feature type="mutagenesis site" description="Does not affect overall structural integrity, but cannot promote FDH activity." evidence="4">
    <original>H</original>
    <variation>A</variation>
    <location>
        <position position="171"/>
    </location>
</feature>
<feature type="mutagenesis site" description="Strongly impairs FDH activity." evidence="4">
    <original>S</original>
    <variation>D</variation>
    <location>
        <position position="240"/>
    </location>
</feature>
<feature type="mutagenesis site" description="Strongly impairs FDH activity." evidence="4">
    <original>F</original>
    <variation>D</variation>
    <location>
        <position position="260"/>
    </location>
</feature>
<feature type="strand" evidence="11">
    <location>
        <begin position="18"/>
        <end position="23"/>
    </location>
</feature>
<feature type="strand" evidence="11">
    <location>
        <begin position="29"/>
        <end position="31"/>
    </location>
</feature>
<feature type="strand" evidence="11">
    <location>
        <begin position="33"/>
        <end position="38"/>
    </location>
</feature>
<feature type="strand" evidence="11">
    <location>
        <begin position="41"/>
        <end position="47"/>
    </location>
</feature>
<feature type="strand" evidence="11">
    <location>
        <begin position="50"/>
        <end position="57"/>
    </location>
</feature>
<feature type="helix" evidence="11">
    <location>
        <begin position="62"/>
        <end position="72"/>
    </location>
</feature>
<feature type="helix" evidence="11">
    <location>
        <begin position="79"/>
        <end position="81"/>
    </location>
</feature>
<feature type="strand" evidence="11">
    <location>
        <begin position="82"/>
        <end position="89"/>
    </location>
</feature>
<feature type="strand" evidence="11">
    <location>
        <begin position="91"/>
        <end position="100"/>
    </location>
</feature>
<feature type="helix" evidence="11">
    <location>
        <begin position="102"/>
        <end position="110"/>
    </location>
</feature>
<feature type="helix" evidence="11">
    <location>
        <begin position="147"/>
        <end position="149"/>
    </location>
</feature>
<feature type="helix" evidence="11">
    <location>
        <begin position="150"/>
        <end position="156"/>
    </location>
</feature>
<feature type="helix" evidence="11">
    <location>
        <begin position="157"/>
        <end position="160"/>
    </location>
</feature>
<feature type="helix" evidence="11">
    <location>
        <begin position="162"/>
        <end position="167"/>
    </location>
</feature>
<feature type="strand" evidence="11">
    <location>
        <begin position="171"/>
        <end position="176"/>
    </location>
</feature>
<feature type="strand" evidence="11">
    <location>
        <begin position="182"/>
        <end position="190"/>
    </location>
</feature>
<feature type="helix" evidence="11">
    <location>
        <begin position="191"/>
        <end position="204"/>
    </location>
</feature>
<feature type="turn" evidence="11">
    <location>
        <begin position="206"/>
        <end position="208"/>
    </location>
</feature>
<feature type="strand" evidence="11">
    <location>
        <begin position="209"/>
        <end position="218"/>
    </location>
</feature>
<feature type="helix" evidence="11">
    <location>
        <begin position="222"/>
        <end position="230"/>
    </location>
</feature>
<feature type="strand" evidence="11">
    <location>
        <begin position="235"/>
        <end position="240"/>
    </location>
</feature>
<feature type="helix" evidence="11">
    <location>
        <begin position="244"/>
        <end position="251"/>
    </location>
</feature>
<feature type="turn" evidence="11">
    <location>
        <begin position="252"/>
        <end position="254"/>
    </location>
</feature>
<feature type="strand" evidence="11">
    <location>
        <begin position="256"/>
        <end position="262"/>
    </location>
</feature>
<feature type="strand" evidence="11">
    <location>
        <begin position="265"/>
        <end position="268"/>
    </location>
</feature>
<feature type="helix" evidence="11">
    <location>
        <begin position="272"/>
        <end position="274"/>
    </location>
</feature>
<sequence length="277" mass="30560">MKKTQRKEIENVTNITGVRQIELWRRDDLQHPRLDEVAEEVPVALVYNGISHVVMMASPKDLEYFALGFSLSEGIIESPRDIFGMDVVPSCNGLEVQIELSSRRFMGLKERRRALAGRTGCGVCGVEQLNDIGKPVQPLPFTQTFDLNKLDDALRHLNDFQPVGQLTGCTHAAAWMLPSGELVGGHEDVGRHVALDKLLGRRSQEGESWQQGAVLVSSRASYEMVQKSAMCGVEILFAVSAATTLAVEVAERCNLTLVGFCKPGRATVYTHPQRLSN</sequence>
<organism>
    <name type="scientific">Escherichia coli (strain K12)</name>
    <dbReference type="NCBI Taxonomy" id="83333"/>
    <lineage>
        <taxon>Bacteria</taxon>
        <taxon>Pseudomonadati</taxon>
        <taxon>Pseudomonadota</taxon>
        <taxon>Gammaproteobacteria</taxon>
        <taxon>Enterobacterales</taxon>
        <taxon>Enterobacteriaceae</taxon>
        <taxon>Escherichia</taxon>
    </lineage>
</organism>
<reference key="1">
    <citation type="journal article" date="1993" name="Nucleic Acids Res.">
        <title>Analysis of the Escherichia coli genome. III. DNA sequence of the region from 87.2 to 89.2 minutes.</title>
        <authorList>
            <person name="Plunkett G. III"/>
            <person name="Burland V."/>
            <person name="Daniels D.L."/>
            <person name="Blattner F.R."/>
        </authorList>
    </citation>
    <scope>NUCLEOTIDE SEQUENCE [LARGE SCALE GENOMIC DNA]</scope>
    <source>
        <strain>K12 / MG1655 / ATCC 47076</strain>
    </source>
</reference>
<reference key="2">
    <citation type="journal article" date="1997" name="Science">
        <title>The complete genome sequence of Escherichia coli K-12.</title>
        <authorList>
            <person name="Blattner F.R."/>
            <person name="Plunkett G. III"/>
            <person name="Bloch C.A."/>
            <person name="Perna N.T."/>
            <person name="Burland V."/>
            <person name="Riley M."/>
            <person name="Collado-Vides J."/>
            <person name="Glasner J.D."/>
            <person name="Rode C.K."/>
            <person name="Mayhew G.F."/>
            <person name="Gregor J."/>
            <person name="Davis N.W."/>
            <person name="Kirkpatrick H.A."/>
            <person name="Goeden M.A."/>
            <person name="Rose D.J."/>
            <person name="Mau B."/>
            <person name="Shao Y."/>
        </authorList>
    </citation>
    <scope>NUCLEOTIDE SEQUENCE [LARGE SCALE GENOMIC DNA]</scope>
    <source>
        <strain>K12 / MG1655 / ATCC 47076</strain>
    </source>
</reference>
<reference key="3">
    <citation type="journal article" date="2006" name="Mol. Syst. Biol.">
        <title>Highly accurate genome sequences of Escherichia coli K-12 strains MG1655 and W3110.</title>
        <authorList>
            <person name="Hayashi K."/>
            <person name="Morooka N."/>
            <person name="Yamamoto Y."/>
            <person name="Fujita K."/>
            <person name="Isono K."/>
            <person name="Choi S."/>
            <person name="Ohtsubo E."/>
            <person name="Baba T."/>
            <person name="Wanner B.L."/>
            <person name="Mori H."/>
            <person name="Horiuchi T."/>
        </authorList>
    </citation>
    <scope>NUCLEOTIDE SEQUENCE [LARGE SCALE GENOMIC DNA]</scope>
    <source>
        <strain>K12 / W3110 / ATCC 27325 / DSM 5911</strain>
    </source>
</reference>
<reference key="4">
    <citation type="journal article" date="1988" name="J. Gen. Microbiol.">
        <title>Mutants of Escherichia coli specifically deficient in respiratory formate dehydrogenase activity.</title>
        <authorList>
            <person name="Mandrand-Berthelot M.A."/>
            <person name="Couchoux-Luthaud G."/>
            <person name="Santini C.L."/>
            <person name="Giordano G."/>
        </authorList>
    </citation>
    <scope>FUNCTION</scope>
    <scope>DISRUPTION PHENOTYPE</scope>
    <source>
        <strain>K12</strain>
    </source>
</reference>
<reference key="5">
    <citation type="journal article" date="1990" name="J. Bacteriol.">
        <title>Identification and expression of the Escherichia coli fdhD and fdhE genes, which are involved in the formation of respiratory formate dehydrogenase.</title>
        <authorList>
            <person name="Schlindwein C."/>
            <person name="Giordano G."/>
            <person name="Santini C.L."/>
            <person name="Mandrand M.A."/>
        </authorList>
    </citation>
    <scope>INDUCTION</scope>
    <scope>SUBCELLULAR LOCATION</scope>
    <source>
        <strain>K12</strain>
    </source>
</reference>
<reference key="6">
    <citation type="journal article" date="1995" name="J. Bacteriol.">
        <title>Expression and characterization of the Escherichia coli fdo locus and a possible physiological role for aerobic formate dehydrogenase.</title>
        <authorList>
            <person name="Abaibou H."/>
            <person name="Pommier J."/>
            <person name="Giordano G."/>
            <person name="Mandrand-Berthelot M.-A."/>
        </authorList>
    </citation>
    <scope>FUNCTION</scope>
</reference>
<reference key="7">
    <citation type="journal article" date="2012" name="J. Biol. Chem.">
        <title>A sulfurtransferase is essential for activity of formate dehydrogenases in Escherichia coli.</title>
        <authorList>
            <person name="Thome R."/>
            <person name="Gust A."/>
            <person name="Toci R."/>
            <person name="Mendel R."/>
            <person name="Bittner F."/>
            <person name="Magalon A."/>
            <person name="Walburger A."/>
        </authorList>
    </citation>
    <scope>FUNCTION</scope>
    <scope>INTERACTION WITH ISCS</scope>
    <scope>ACTIVE SITE</scope>
    <scope>MUTAGENESIS OF CYS-121 AND CYS-124</scope>
</reference>
<reference key="8">
    <citation type="journal article" date="2015" name="Nat. Commun.">
        <title>Sulphur shuttling across a chaperone during molybdenum cofactor maturation.</title>
        <authorList>
            <person name="Arnoux P."/>
            <person name="Ruppelt C."/>
            <person name="Oudouhou F."/>
            <person name="Lavergne J."/>
            <person name="Siponen M.I."/>
            <person name="Toci R."/>
            <person name="Mendel R.R."/>
            <person name="Bittner F."/>
            <person name="Pignol D."/>
            <person name="Magalon A."/>
            <person name="Walburger A."/>
        </authorList>
    </citation>
    <scope>X-RAY CRYSTALLOGRAPHY (2.80 ANGSTROMS) IN COMPLEX WITH GDP</scope>
    <scope>FUNCTION</scope>
    <scope>SUBUNIT</scope>
    <scope>MOLYBDENUM-BINDING</scope>
    <scope>MUTAGENESIS OF HIS-171; SER-240 AND PHE-260</scope>
</reference>
<accession>P32177</accession>
<accession>Q2M8J2</accession>
<evidence type="ECO:0000255" key="1">
    <source>
        <dbReference type="HAMAP-Rule" id="MF_00187"/>
    </source>
</evidence>
<evidence type="ECO:0000269" key="2">
    <source>
    </source>
</evidence>
<evidence type="ECO:0000269" key="3">
    <source>
    </source>
</evidence>
<evidence type="ECO:0000269" key="4">
    <source>
    </source>
</evidence>
<evidence type="ECO:0000269" key="5">
    <source>
    </source>
</evidence>
<evidence type="ECO:0000269" key="6">
    <source>
    </source>
</evidence>
<evidence type="ECO:0000303" key="7">
    <source>
    </source>
</evidence>
<evidence type="ECO:0000303" key="8">
    <source>
    </source>
</evidence>
<evidence type="ECO:0000305" key="9"/>
<evidence type="ECO:0000305" key="10">
    <source>
    </source>
</evidence>
<evidence type="ECO:0007829" key="11">
    <source>
        <dbReference type="PDB" id="4PDE"/>
    </source>
</evidence>
<proteinExistence type="evidence at protein level"/>
<protein>
    <recommendedName>
        <fullName evidence="1 9">Sulfur carrier protein FdhD</fullName>
    </recommendedName>
    <alternativeName>
        <fullName evidence="7">Sulfurtransferase FdhD</fullName>
    </alternativeName>
</protein>
<keyword id="KW-0002">3D-structure</keyword>
<keyword id="KW-0963">Cytoplasm</keyword>
<keyword id="KW-0501">Molybdenum cofactor biosynthesis</keyword>
<keyword id="KW-1185">Reference proteome</keyword>
<gene>
    <name evidence="1 8" type="primary">fdhD</name>
    <name type="ordered locus">b3895</name>
    <name type="ordered locus">JW3866</name>
</gene>
<comment type="function">
    <text evidence="3 4 5 6">Required for formate dehydrogenase (FDH) activity (PubMed:22194618, PubMed:25649206, PubMed:3077634, PubMed:8522521). Acts as a sulfur carrier protein that transfers sulfur from IscS to the molybdenum cofactor prior to its insertion into FDH. Specifically interacts with IscS and stimulates its cysteine desulfurase activity. Also binds the molybdenum cofactor (PubMed:22194618, PubMed:25649206). Required for activity of formate dehydrogenase N (FDH-N), formate dehydrogenase O (FDH-O) and formate dehydrogenase H (FDH-H) (PubMed:22194618, PubMed:3077634, PubMed:8522521).</text>
</comment>
<comment type="subunit">
    <text evidence="3 4">Homodimer (PubMed:25649206). Interacts with IscS (PubMed:22194618).</text>
</comment>
<comment type="subcellular location">
    <subcellularLocation>
        <location evidence="1 2">Cytoplasm</location>
    </subcellularLocation>
</comment>
<comment type="induction">
    <text evidence="2">Repressed by aerobiosis.</text>
</comment>
<comment type="disruption phenotype">
    <text evidence="5">Mutants lack FDH-N activity and exhibit defects in FDH-H activity.</text>
</comment>
<comment type="similarity">
    <text evidence="1 9">Belongs to the FdhD family.</text>
</comment>